<keyword id="KW-0997">Cell inner membrane</keyword>
<keyword id="KW-1003">Cell membrane</keyword>
<keyword id="KW-0143">Chaperone</keyword>
<keyword id="KW-1015">Disulfide bond</keyword>
<keyword id="KW-0249">Electron transport</keyword>
<keyword id="KW-0472">Membrane</keyword>
<keyword id="KW-0560">Oxidoreductase</keyword>
<keyword id="KW-0676">Redox-active center</keyword>
<keyword id="KW-0812">Transmembrane</keyword>
<keyword id="KW-1133">Transmembrane helix</keyword>
<keyword id="KW-0813">Transport</keyword>
<reference key="1">
    <citation type="journal article" date="2007" name="Environ. Microbiol.">
        <title>Whole-genome analysis of the ammonia-oxidizing bacterium, Nitrosomonas eutropha C91: implications for niche adaptation.</title>
        <authorList>
            <person name="Stein L.Y."/>
            <person name="Arp D.J."/>
            <person name="Berube P.M."/>
            <person name="Chain P.S."/>
            <person name="Hauser L."/>
            <person name="Jetten M.S."/>
            <person name="Klotz M.G."/>
            <person name="Larimer F.W."/>
            <person name="Norton J.M."/>
            <person name="Op den Camp H.J.M."/>
            <person name="Shin M."/>
            <person name="Wei X."/>
        </authorList>
    </citation>
    <scope>NUCLEOTIDE SEQUENCE [LARGE SCALE GENOMIC DNA]</scope>
    <source>
        <strain>DSM 101675 / C91 / Nm57</strain>
    </source>
</reference>
<dbReference type="EMBL" id="CP000450">
    <property type="protein sequence ID" value="ABI59758.1"/>
    <property type="molecule type" value="Genomic_DNA"/>
</dbReference>
<dbReference type="RefSeq" id="WP_011634564.1">
    <property type="nucleotide sequence ID" value="NC_008344.1"/>
</dbReference>
<dbReference type="SMR" id="Q0AFX4"/>
<dbReference type="STRING" id="335283.Neut_1513"/>
<dbReference type="KEGG" id="net:Neut_1513"/>
<dbReference type="eggNOG" id="COG1495">
    <property type="taxonomic scope" value="Bacteria"/>
</dbReference>
<dbReference type="HOGENOM" id="CLU_098660_1_0_4"/>
<dbReference type="OrthoDB" id="3711263at2"/>
<dbReference type="Proteomes" id="UP000001966">
    <property type="component" value="Chromosome"/>
</dbReference>
<dbReference type="GO" id="GO:0005886">
    <property type="term" value="C:plasma membrane"/>
    <property type="evidence" value="ECO:0007669"/>
    <property type="project" value="UniProtKB-SubCell"/>
</dbReference>
<dbReference type="GO" id="GO:0009055">
    <property type="term" value="F:electron transfer activity"/>
    <property type="evidence" value="ECO:0007669"/>
    <property type="project" value="UniProtKB-UniRule"/>
</dbReference>
<dbReference type="GO" id="GO:0015035">
    <property type="term" value="F:protein-disulfide reductase activity"/>
    <property type="evidence" value="ECO:0007669"/>
    <property type="project" value="UniProtKB-UniRule"/>
</dbReference>
<dbReference type="GO" id="GO:0006457">
    <property type="term" value="P:protein folding"/>
    <property type="evidence" value="ECO:0007669"/>
    <property type="project" value="InterPro"/>
</dbReference>
<dbReference type="Gene3D" id="1.20.1550.10">
    <property type="entry name" value="DsbB-like"/>
    <property type="match status" value="1"/>
</dbReference>
<dbReference type="HAMAP" id="MF_00286">
    <property type="entry name" value="DsbB"/>
    <property type="match status" value="1"/>
</dbReference>
<dbReference type="InterPro" id="IPR003752">
    <property type="entry name" value="DiS_bond_form_DsbB/BdbC"/>
</dbReference>
<dbReference type="InterPro" id="IPR022920">
    <property type="entry name" value="Disulphide_bond_form_DsbB"/>
</dbReference>
<dbReference type="InterPro" id="IPR050183">
    <property type="entry name" value="DsbB"/>
</dbReference>
<dbReference type="InterPro" id="IPR023380">
    <property type="entry name" value="DsbB-like_sf"/>
</dbReference>
<dbReference type="PANTHER" id="PTHR36570">
    <property type="entry name" value="DISULFIDE BOND FORMATION PROTEIN B"/>
    <property type="match status" value="1"/>
</dbReference>
<dbReference type="PANTHER" id="PTHR36570:SF3">
    <property type="entry name" value="DISULFIDE BOND FORMATION PROTEIN B"/>
    <property type="match status" value="1"/>
</dbReference>
<dbReference type="Pfam" id="PF02600">
    <property type="entry name" value="DsbB"/>
    <property type="match status" value="1"/>
</dbReference>
<dbReference type="SUPFAM" id="SSF158442">
    <property type="entry name" value="DsbB-like"/>
    <property type="match status" value="1"/>
</dbReference>
<proteinExistence type="inferred from homology"/>
<evidence type="ECO:0000255" key="1">
    <source>
        <dbReference type="HAMAP-Rule" id="MF_00286"/>
    </source>
</evidence>
<gene>
    <name evidence="1" type="primary">dsbB</name>
    <name type="ordered locus">Neut_1513</name>
</gene>
<sequence>MRIIFLLIFLACAGLIGYALYLQLMDGLLPCPLCIFQRIAYWLIGITALFTFIHNPQSLGQHIYYGLIILFSLAGAIVAGRQAWLIRFPEAFECGISPEEAFLNGLPLAQWWPNMFEANGDCNDGTWQFLSLTLPDWSLLIFAAFGIIAGLLWHKKYNSINQ</sequence>
<accession>Q0AFX4</accession>
<name>DSBB_NITEC</name>
<protein>
    <recommendedName>
        <fullName evidence="1">Disulfide bond formation protein B</fullName>
    </recommendedName>
    <alternativeName>
        <fullName evidence="1">Disulfide oxidoreductase</fullName>
    </alternativeName>
</protein>
<feature type="chain" id="PRO_0000298375" description="Disulfide bond formation protein B">
    <location>
        <begin position="1"/>
        <end position="162"/>
    </location>
</feature>
<feature type="topological domain" description="Cytoplasmic" evidence="1">
    <location>
        <begin position="1"/>
        <end position="4"/>
    </location>
</feature>
<feature type="transmembrane region" description="Helical" evidence="1">
    <location>
        <begin position="5"/>
        <end position="21"/>
    </location>
</feature>
<feature type="topological domain" description="Periplasmic" evidence="1">
    <location>
        <begin position="22"/>
        <end position="39"/>
    </location>
</feature>
<feature type="transmembrane region" description="Helical" evidence="1">
    <location>
        <begin position="40"/>
        <end position="56"/>
    </location>
</feature>
<feature type="topological domain" description="Cytoplasmic" evidence="1">
    <location>
        <begin position="57"/>
        <end position="62"/>
    </location>
</feature>
<feature type="transmembrane region" description="Helical" evidence="1">
    <location>
        <begin position="63"/>
        <end position="80"/>
    </location>
</feature>
<feature type="topological domain" description="Periplasmic" evidence="1">
    <location>
        <begin position="81"/>
        <end position="136"/>
    </location>
</feature>
<feature type="transmembrane region" description="Helical" evidence="1">
    <location>
        <begin position="137"/>
        <end position="155"/>
    </location>
</feature>
<feature type="topological domain" description="Cytoplasmic" evidence="1">
    <location>
        <begin position="156"/>
        <end position="162"/>
    </location>
</feature>
<feature type="disulfide bond" description="Redox-active" evidence="1">
    <location>
        <begin position="31"/>
        <end position="34"/>
    </location>
</feature>
<feature type="disulfide bond" description="Redox-active" evidence="1">
    <location>
        <begin position="94"/>
        <end position="122"/>
    </location>
</feature>
<organism>
    <name type="scientific">Nitrosomonas eutropha (strain DSM 101675 / C91 / Nm57)</name>
    <dbReference type="NCBI Taxonomy" id="335283"/>
    <lineage>
        <taxon>Bacteria</taxon>
        <taxon>Pseudomonadati</taxon>
        <taxon>Pseudomonadota</taxon>
        <taxon>Betaproteobacteria</taxon>
        <taxon>Nitrosomonadales</taxon>
        <taxon>Nitrosomonadaceae</taxon>
        <taxon>Nitrosomonas</taxon>
    </lineage>
</organism>
<comment type="function">
    <text evidence="1">Required for disulfide bond formation in some periplasmic proteins. Acts by oxidizing the DsbA protein.</text>
</comment>
<comment type="subcellular location">
    <subcellularLocation>
        <location evidence="1">Cell inner membrane</location>
        <topology evidence="1">Multi-pass membrane protein</topology>
    </subcellularLocation>
</comment>
<comment type="similarity">
    <text evidence="1">Belongs to the DsbB family.</text>
</comment>